<comment type="function">
    <text evidence="1">Nucleotidyltransferase involved in the post-translational modification of proteins. It can catalyze the addition of adenosine monophosphate (AMP) or uridine monophosphate (UMP) to a protein, resulting in modifications known as AMPylation and UMPylation.</text>
</comment>
<comment type="catalytic activity">
    <reaction evidence="1">
        <text>L-seryl-[protein] + ATP = 3-O-(5'-adenylyl)-L-seryl-[protein] + diphosphate</text>
        <dbReference type="Rhea" id="RHEA:58120"/>
        <dbReference type="Rhea" id="RHEA-COMP:9863"/>
        <dbReference type="Rhea" id="RHEA-COMP:15073"/>
        <dbReference type="ChEBI" id="CHEBI:29999"/>
        <dbReference type="ChEBI" id="CHEBI:30616"/>
        <dbReference type="ChEBI" id="CHEBI:33019"/>
        <dbReference type="ChEBI" id="CHEBI:142516"/>
        <dbReference type="EC" id="2.7.7.108"/>
    </reaction>
</comment>
<comment type="catalytic activity">
    <reaction evidence="1">
        <text>L-threonyl-[protein] + ATP = 3-O-(5'-adenylyl)-L-threonyl-[protein] + diphosphate</text>
        <dbReference type="Rhea" id="RHEA:54292"/>
        <dbReference type="Rhea" id="RHEA-COMP:11060"/>
        <dbReference type="Rhea" id="RHEA-COMP:13847"/>
        <dbReference type="ChEBI" id="CHEBI:30013"/>
        <dbReference type="ChEBI" id="CHEBI:30616"/>
        <dbReference type="ChEBI" id="CHEBI:33019"/>
        <dbReference type="ChEBI" id="CHEBI:138113"/>
        <dbReference type="EC" id="2.7.7.108"/>
    </reaction>
</comment>
<comment type="catalytic activity">
    <reaction evidence="1">
        <text>L-tyrosyl-[protein] + ATP = O-(5'-adenylyl)-L-tyrosyl-[protein] + diphosphate</text>
        <dbReference type="Rhea" id="RHEA:54288"/>
        <dbReference type="Rhea" id="RHEA-COMP:10136"/>
        <dbReference type="Rhea" id="RHEA-COMP:13846"/>
        <dbReference type="ChEBI" id="CHEBI:30616"/>
        <dbReference type="ChEBI" id="CHEBI:33019"/>
        <dbReference type="ChEBI" id="CHEBI:46858"/>
        <dbReference type="ChEBI" id="CHEBI:83624"/>
        <dbReference type="EC" id="2.7.7.108"/>
    </reaction>
</comment>
<comment type="catalytic activity">
    <reaction evidence="1">
        <text>L-histidyl-[protein] + UTP = N(tele)-(5'-uridylyl)-L-histidyl-[protein] + diphosphate</text>
        <dbReference type="Rhea" id="RHEA:83891"/>
        <dbReference type="Rhea" id="RHEA-COMP:9745"/>
        <dbReference type="Rhea" id="RHEA-COMP:20239"/>
        <dbReference type="ChEBI" id="CHEBI:29979"/>
        <dbReference type="ChEBI" id="CHEBI:33019"/>
        <dbReference type="ChEBI" id="CHEBI:46398"/>
        <dbReference type="ChEBI" id="CHEBI:233474"/>
    </reaction>
</comment>
<comment type="catalytic activity">
    <reaction evidence="1">
        <text>L-seryl-[protein] + UTP = O-(5'-uridylyl)-L-seryl-[protein] + diphosphate</text>
        <dbReference type="Rhea" id="RHEA:64604"/>
        <dbReference type="Rhea" id="RHEA-COMP:9863"/>
        <dbReference type="Rhea" id="RHEA-COMP:16635"/>
        <dbReference type="ChEBI" id="CHEBI:29999"/>
        <dbReference type="ChEBI" id="CHEBI:33019"/>
        <dbReference type="ChEBI" id="CHEBI:46398"/>
        <dbReference type="ChEBI" id="CHEBI:156051"/>
    </reaction>
</comment>
<comment type="catalytic activity">
    <reaction evidence="1">
        <text>L-tyrosyl-[protein] + UTP = O-(5'-uridylyl)-L-tyrosyl-[protein] + diphosphate</text>
        <dbReference type="Rhea" id="RHEA:83887"/>
        <dbReference type="Rhea" id="RHEA-COMP:10136"/>
        <dbReference type="Rhea" id="RHEA-COMP:20238"/>
        <dbReference type="ChEBI" id="CHEBI:33019"/>
        <dbReference type="ChEBI" id="CHEBI:46398"/>
        <dbReference type="ChEBI" id="CHEBI:46858"/>
        <dbReference type="ChEBI" id="CHEBI:90602"/>
    </reaction>
</comment>
<comment type="cofactor">
    <cofactor evidence="1">
        <name>Mg(2+)</name>
        <dbReference type="ChEBI" id="CHEBI:18420"/>
    </cofactor>
    <cofactor evidence="1">
        <name>Mn(2+)</name>
        <dbReference type="ChEBI" id="CHEBI:29035"/>
    </cofactor>
</comment>
<comment type="similarity">
    <text evidence="1">Belongs to the SELO family.</text>
</comment>
<accession>A8A0P8</accession>
<keyword id="KW-0067">ATP-binding</keyword>
<keyword id="KW-0460">Magnesium</keyword>
<keyword id="KW-0464">Manganese</keyword>
<keyword id="KW-0479">Metal-binding</keyword>
<keyword id="KW-0547">Nucleotide-binding</keyword>
<keyword id="KW-0548">Nucleotidyltransferase</keyword>
<keyword id="KW-0808">Transferase</keyword>
<feature type="chain" id="PRO_1000062028" description="Protein nucleotidyltransferase YdiU">
    <location>
        <begin position="1"/>
        <end position="478"/>
    </location>
</feature>
<feature type="active site" description="Proton acceptor" evidence="1">
    <location>
        <position position="246"/>
    </location>
</feature>
<feature type="binding site" evidence="1">
    <location>
        <position position="84"/>
    </location>
    <ligand>
        <name>ATP</name>
        <dbReference type="ChEBI" id="CHEBI:30616"/>
    </ligand>
</feature>
<feature type="binding site" evidence="1">
    <location>
        <position position="86"/>
    </location>
    <ligand>
        <name>ATP</name>
        <dbReference type="ChEBI" id="CHEBI:30616"/>
    </ligand>
</feature>
<feature type="binding site" evidence="1">
    <location>
        <position position="87"/>
    </location>
    <ligand>
        <name>ATP</name>
        <dbReference type="ChEBI" id="CHEBI:30616"/>
    </ligand>
</feature>
<feature type="binding site" evidence="1">
    <location>
        <position position="107"/>
    </location>
    <ligand>
        <name>ATP</name>
        <dbReference type="ChEBI" id="CHEBI:30616"/>
    </ligand>
</feature>
<feature type="binding site" evidence="1">
    <location>
        <position position="119"/>
    </location>
    <ligand>
        <name>ATP</name>
        <dbReference type="ChEBI" id="CHEBI:30616"/>
    </ligand>
</feature>
<feature type="binding site" evidence="1">
    <location>
        <position position="120"/>
    </location>
    <ligand>
        <name>ATP</name>
        <dbReference type="ChEBI" id="CHEBI:30616"/>
    </ligand>
</feature>
<feature type="binding site" evidence="1">
    <location>
        <position position="170"/>
    </location>
    <ligand>
        <name>ATP</name>
        <dbReference type="ChEBI" id="CHEBI:30616"/>
    </ligand>
</feature>
<feature type="binding site" evidence="1">
    <location>
        <position position="177"/>
    </location>
    <ligand>
        <name>ATP</name>
        <dbReference type="ChEBI" id="CHEBI:30616"/>
    </ligand>
</feature>
<feature type="binding site" evidence="1">
    <location>
        <position position="247"/>
    </location>
    <ligand>
        <name>Mg(2+)</name>
        <dbReference type="ChEBI" id="CHEBI:18420"/>
    </ligand>
</feature>
<feature type="binding site" evidence="1">
    <location>
        <position position="256"/>
    </location>
    <ligand>
        <name>ATP</name>
        <dbReference type="ChEBI" id="CHEBI:30616"/>
    </ligand>
</feature>
<feature type="binding site" evidence="1">
    <location>
        <position position="256"/>
    </location>
    <ligand>
        <name>Mg(2+)</name>
        <dbReference type="ChEBI" id="CHEBI:18420"/>
    </ligand>
</feature>
<reference key="1">
    <citation type="journal article" date="2008" name="J. Bacteriol.">
        <title>The pangenome structure of Escherichia coli: comparative genomic analysis of E. coli commensal and pathogenic isolates.</title>
        <authorList>
            <person name="Rasko D.A."/>
            <person name="Rosovitz M.J."/>
            <person name="Myers G.S.A."/>
            <person name="Mongodin E.F."/>
            <person name="Fricke W.F."/>
            <person name="Gajer P."/>
            <person name="Crabtree J."/>
            <person name="Sebaihia M."/>
            <person name="Thomson N.R."/>
            <person name="Chaudhuri R."/>
            <person name="Henderson I.R."/>
            <person name="Sperandio V."/>
            <person name="Ravel J."/>
        </authorList>
    </citation>
    <scope>NUCLEOTIDE SEQUENCE [LARGE SCALE GENOMIC DNA]</scope>
    <source>
        <strain>HS</strain>
    </source>
</reference>
<name>SELO_ECOHS</name>
<protein>
    <recommendedName>
        <fullName evidence="1">Protein nucleotidyltransferase YdiU</fullName>
        <ecNumber evidence="1">2.7.7.-</ecNumber>
    </recommendedName>
    <alternativeName>
        <fullName evidence="1">Protein adenylyltransferase YdiU</fullName>
        <ecNumber evidence="1">2.7.7.108</ecNumber>
    </alternativeName>
    <alternativeName>
        <fullName evidence="1">Protein uridylyltransferase YdiU</fullName>
        <ecNumber evidence="1">2.7.7.-</ecNumber>
    </alternativeName>
</protein>
<evidence type="ECO:0000255" key="1">
    <source>
        <dbReference type="HAMAP-Rule" id="MF_00692"/>
    </source>
</evidence>
<organism>
    <name type="scientific">Escherichia coli O9:H4 (strain HS)</name>
    <dbReference type="NCBI Taxonomy" id="331112"/>
    <lineage>
        <taxon>Bacteria</taxon>
        <taxon>Pseudomonadati</taxon>
        <taxon>Pseudomonadota</taxon>
        <taxon>Gammaproteobacteria</taxon>
        <taxon>Enterobacterales</taxon>
        <taxon>Enterobacteriaceae</taxon>
        <taxon>Escherichia</taxon>
    </lineage>
</organism>
<dbReference type="EC" id="2.7.7.-" evidence="1"/>
<dbReference type="EC" id="2.7.7.108" evidence="1"/>
<dbReference type="EMBL" id="CP000802">
    <property type="protein sequence ID" value="ABV06102.1"/>
    <property type="molecule type" value="Genomic_DNA"/>
</dbReference>
<dbReference type="RefSeq" id="WP_000175706.1">
    <property type="nucleotide sequence ID" value="NC_009800.1"/>
</dbReference>
<dbReference type="SMR" id="A8A0P8"/>
<dbReference type="KEGG" id="ecx:EcHS_A1786"/>
<dbReference type="HOGENOM" id="CLU_010245_4_1_6"/>
<dbReference type="GO" id="GO:0070733">
    <property type="term" value="F:AMPylase activity"/>
    <property type="evidence" value="ECO:0007669"/>
    <property type="project" value="RHEA"/>
</dbReference>
<dbReference type="GO" id="GO:0005524">
    <property type="term" value="F:ATP binding"/>
    <property type="evidence" value="ECO:0007669"/>
    <property type="project" value="UniProtKB-UniRule"/>
</dbReference>
<dbReference type="GO" id="GO:0000287">
    <property type="term" value="F:magnesium ion binding"/>
    <property type="evidence" value="ECO:0007669"/>
    <property type="project" value="UniProtKB-UniRule"/>
</dbReference>
<dbReference type="HAMAP" id="MF_00692">
    <property type="entry name" value="YdiU_SelO"/>
    <property type="match status" value="1"/>
</dbReference>
<dbReference type="InterPro" id="IPR054838">
    <property type="entry name" value="adnlytase_SelO"/>
</dbReference>
<dbReference type="InterPro" id="IPR003846">
    <property type="entry name" value="SelO"/>
</dbReference>
<dbReference type="NCBIfam" id="NF040880">
    <property type="entry name" value="adnlytase_SelO"/>
    <property type="match status" value="1"/>
</dbReference>
<dbReference type="NCBIfam" id="NF000658">
    <property type="entry name" value="PRK00029.1"/>
    <property type="match status" value="1"/>
</dbReference>
<dbReference type="PANTHER" id="PTHR32057">
    <property type="entry name" value="PROTEIN ADENYLYLTRANSFERASE SELO, MITOCHONDRIAL"/>
    <property type="match status" value="1"/>
</dbReference>
<dbReference type="PANTHER" id="PTHR32057:SF14">
    <property type="entry name" value="PROTEIN ADENYLYLTRANSFERASE SELO, MITOCHONDRIAL"/>
    <property type="match status" value="1"/>
</dbReference>
<dbReference type="Pfam" id="PF02696">
    <property type="entry name" value="SelO"/>
    <property type="match status" value="1"/>
</dbReference>
<gene>
    <name evidence="1" type="primary">ydiU</name>
    <name evidence="1" type="synonym">selO</name>
    <name type="ordered locus">EcHS_A1786</name>
</gene>
<sequence>MTLSFVTRWRDELPETYTALSPTPLNNARLIWHNTELANTLSIPSSLFKNGAGVWGGEALLPGMSPLAQVYSGHQFGVWAGQLGDGRGILLGEQLLADGTTMDWHLKGAGLTPYSRMGDGRAVLRSTIRESLASEAMHYLGIPTTRALSIVTSDSPVYRETAEPGAMLMRVAPSHLRFGHFEHFYYRRESEKVRQLADFAIRHYWSHLEDDEDKYRLWFSDVVARTASLIAQWQTVGFAHGVMNTDNMSLLGLTLDYGPFGFLDDYEPGFICNHSDHQGRYSFDNQPAVALWNLQRLAQTLSPFVAVDALNEALDSYQQVLLTHYGERMRQKLGFMTEQKEDNALLNELFSLMARERSDYTRTFRMLSLTEQHSAASPLRDEFIDRAAFDDWFARYRGRLQQDEVSDSERQQLMQSVNPALVLRNWLAQRAIEAAEKGDMTELHRLHEALRNPFSDRDDDYVSRPPDWGKRLEVSCSS</sequence>
<proteinExistence type="inferred from homology"/>